<reference key="1">
    <citation type="journal article" date="2006" name="J. Bacteriol.">
        <title>Complete genome sequence of Yersinia pestis strains Antiqua and Nepal516: evidence of gene reduction in an emerging pathogen.</title>
        <authorList>
            <person name="Chain P.S.G."/>
            <person name="Hu P."/>
            <person name="Malfatti S.A."/>
            <person name="Radnedge L."/>
            <person name="Larimer F."/>
            <person name="Vergez L.M."/>
            <person name="Worsham P."/>
            <person name="Chu M.C."/>
            <person name="Andersen G.L."/>
        </authorList>
    </citation>
    <scope>NUCLEOTIDE SEQUENCE [LARGE SCALE GENOMIC DNA]</scope>
    <source>
        <strain>Antiqua</strain>
    </source>
</reference>
<accession>Q1CBW4</accession>
<feature type="chain" id="PRO_1000005385" description="Small ribosomal subunit protein bS6">
    <location>
        <begin position="1"/>
        <end position="130"/>
    </location>
</feature>
<feature type="region of interest" description="Disordered" evidence="2">
    <location>
        <begin position="99"/>
        <end position="130"/>
    </location>
</feature>
<feature type="compositionally biased region" description="Basic and acidic residues" evidence="2">
    <location>
        <begin position="104"/>
        <end position="116"/>
    </location>
</feature>
<feature type="compositionally biased region" description="Acidic residues" evidence="2">
    <location>
        <begin position="119"/>
        <end position="130"/>
    </location>
</feature>
<dbReference type="EMBL" id="CP000308">
    <property type="protein sequence ID" value="ABG12058.1"/>
    <property type="molecule type" value="Genomic_DNA"/>
</dbReference>
<dbReference type="RefSeq" id="WP_002210153.1">
    <property type="nucleotide sequence ID" value="NZ_CP009906.1"/>
</dbReference>
<dbReference type="SMR" id="Q1CBW4"/>
<dbReference type="GeneID" id="97457911"/>
<dbReference type="KEGG" id="ypa:YPA_0089"/>
<dbReference type="Proteomes" id="UP000001971">
    <property type="component" value="Chromosome"/>
</dbReference>
<dbReference type="GO" id="GO:0022627">
    <property type="term" value="C:cytosolic small ribosomal subunit"/>
    <property type="evidence" value="ECO:0007669"/>
    <property type="project" value="TreeGrafter"/>
</dbReference>
<dbReference type="GO" id="GO:0070181">
    <property type="term" value="F:small ribosomal subunit rRNA binding"/>
    <property type="evidence" value="ECO:0007669"/>
    <property type="project" value="TreeGrafter"/>
</dbReference>
<dbReference type="GO" id="GO:0003735">
    <property type="term" value="F:structural constituent of ribosome"/>
    <property type="evidence" value="ECO:0007669"/>
    <property type="project" value="InterPro"/>
</dbReference>
<dbReference type="GO" id="GO:0006412">
    <property type="term" value="P:translation"/>
    <property type="evidence" value="ECO:0007669"/>
    <property type="project" value="UniProtKB-UniRule"/>
</dbReference>
<dbReference type="CDD" id="cd00473">
    <property type="entry name" value="bS6"/>
    <property type="match status" value="1"/>
</dbReference>
<dbReference type="FunFam" id="3.30.70.60:FF:000003">
    <property type="entry name" value="30S ribosomal protein S6"/>
    <property type="match status" value="1"/>
</dbReference>
<dbReference type="Gene3D" id="3.30.70.60">
    <property type="match status" value="1"/>
</dbReference>
<dbReference type="HAMAP" id="MF_00360">
    <property type="entry name" value="Ribosomal_bS6"/>
    <property type="match status" value="1"/>
</dbReference>
<dbReference type="InterPro" id="IPR000529">
    <property type="entry name" value="Ribosomal_bS6"/>
</dbReference>
<dbReference type="InterPro" id="IPR020815">
    <property type="entry name" value="Ribosomal_bS6_CS"/>
</dbReference>
<dbReference type="InterPro" id="IPR035980">
    <property type="entry name" value="Ribosomal_bS6_sf"/>
</dbReference>
<dbReference type="InterPro" id="IPR020814">
    <property type="entry name" value="Ribosomal_S6_plastid/chlpt"/>
</dbReference>
<dbReference type="InterPro" id="IPR014717">
    <property type="entry name" value="Transl_elong_EF1B/ribsomal_bS6"/>
</dbReference>
<dbReference type="NCBIfam" id="TIGR00166">
    <property type="entry name" value="S6"/>
    <property type="match status" value="1"/>
</dbReference>
<dbReference type="PANTHER" id="PTHR21011">
    <property type="entry name" value="MITOCHONDRIAL 28S RIBOSOMAL PROTEIN S6"/>
    <property type="match status" value="1"/>
</dbReference>
<dbReference type="PANTHER" id="PTHR21011:SF1">
    <property type="entry name" value="SMALL RIBOSOMAL SUBUNIT PROTEIN BS6M"/>
    <property type="match status" value="1"/>
</dbReference>
<dbReference type="Pfam" id="PF01250">
    <property type="entry name" value="Ribosomal_S6"/>
    <property type="match status" value="1"/>
</dbReference>
<dbReference type="SUPFAM" id="SSF54995">
    <property type="entry name" value="Ribosomal protein S6"/>
    <property type="match status" value="1"/>
</dbReference>
<dbReference type="PROSITE" id="PS01048">
    <property type="entry name" value="RIBOSOMAL_S6"/>
    <property type="match status" value="1"/>
</dbReference>
<organism>
    <name type="scientific">Yersinia pestis bv. Antiqua (strain Antiqua)</name>
    <dbReference type="NCBI Taxonomy" id="360102"/>
    <lineage>
        <taxon>Bacteria</taxon>
        <taxon>Pseudomonadati</taxon>
        <taxon>Pseudomonadota</taxon>
        <taxon>Gammaproteobacteria</taxon>
        <taxon>Enterobacterales</taxon>
        <taxon>Yersiniaceae</taxon>
        <taxon>Yersinia</taxon>
    </lineage>
</organism>
<evidence type="ECO:0000255" key="1">
    <source>
        <dbReference type="HAMAP-Rule" id="MF_00360"/>
    </source>
</evidence>
<evidence type="ECO:0000256" key="2">
    <source>
        <dbReference type="SAM" id="MobiDB-lite"/>
    </source>
</evidence>
<evidence type="ECO:0000305" key="3"/>
<proteinExistence type="inferred from homology"/>
<keyword id="KW-0687">Ribonucleoprotein</keyword>
<keyword id="KW-0689">Ribosomal protein</keyword>
<keyword id="KW-0694">RNA-binding</keyword>
<keyword id="KW-0699">rRNA-binding</keyword>
<protein>
    <recommendedName>
        <fullName evidence="1">Small ribosomal subunit protein bS6</fullName>
    </recommendedName>
    <alternativeName>
        <fullName evidence="3">30S ribosomal protein S6</fullName>
    </alternativeName>
</protein>
<name>RS6_YERPA</name>
<gene>
    <name evidence="1" type="primary">rpsF</name>
    <name type="ordered locus">YPA_0089</name>
</gene>
<sequence length="130" mass="15008">MRHYEIVFMVHPDQSEQVPGMIERYSATITNAAGTIHRLEDWGRRQLAYPINKLHKAHYVLLNVEAPQEAIDELETNFRFNDAVIRSMVMRVKHAVTEASPMVKAKDERRERHDFASEANDDSEAGDSEE</sequence>
<comment type="function">
    <text evidence="1">Binds together with bS18 to 16S ribosomal RNA.</text>
</comment>
<comment type="similarity">
    <text evidence="1">Belongs to the bacterial ribosomal protein bS6 family.</text>
</comment>